<gene>
    <name evidence="1" type="primary">gcvH</name>
    <name type="ordered locus">Mpop_0778</name>
</gene>
<dbReference type="EMBL" id="CP001029">
    <property type="protein sequence ID" value="ACB78956.1"/>
    <property type="molecule type" value="Genomic_DNA"/>
</dbReference>
<dbReference type="RefSeq" id="WP_012452712.1">
    <property type="nucleotide sequence ID" value="NC_010725.1"/>
</dbReference>
<dbReference type="SMR" id="B1Z7Y5"/>
<dbReference type="STRING" id="441620.Mpop_0778"/>
<dbReference type="KEGG" id="mpo:Mpop_0778"/>
<dbReference type="eggNOG" id="COG0509">
    <property type="taxonomic scope" value="Bacteria"/>
</dbReference>
<dbReference type="HOGENOM" id="CLU_097408_2_0_5"/>
<dbReference type="OrthoDB" id="9796712at2"/>
<dbReference type="Proteomes" id="UP000007136">
    <property type="component" value="Chromosome"/>
</dbReference>
<dbReference type="GO" id="GO:0005737">
    <property type="term" value="C:cytoplasm"/>
    <property type="evidence" value="ECO:0007669"/>
    <property type="project" value="TreeGrafter"/>
</dbReference>
<dbReference type="GO" id="GO:0005960">
    <property type="term" value="C:glycine cleavage complex"/>
    <property type="evidence" value="ECO:0007669"/>
    <property type="project" value="InterPro"/>
</dbReference>
<dbReference type="GO" id="GO:0019464">
    <property type="term" value="P:glycine decarboxylation via glycine cleavage system"/>
    <property type="evidence" value="ECO:0007669"/>
    <property type="project" value="UniProtKB-UniRule"/>
</dbReference>
<dbReference type="CDD" id="cd06848">
    <property type="entry name" value="GCS_H"/>
    <property type="match status" value="1"/>
</dbReference>
<dbReference type="Gene3D" id="2.40.50.100">
    <property type="match status" value="1"/>
</dbReference>
<dbReference type="HAMAP" id="MF_00272">
    <property type="entry name" value="GcvH"/>
    <property type="match status" value="1"/>
</dbReference>
<dbReference type="InterPro" id="IPR003016">
    <property type="entry name" value="2-oxoA_DH_lipoyl-BS"/>
</dbReference>
<dbReference type="InterPro" id="IPR000089">
    <property type="entry name" value="Biotin_lipoyl"/>
</dbReference>
<dbReference type="InterPro" id="IPR002930">
    <property type="entry name" value="GCV_H"/>
</dbReference>
<dbReference type="InterPro" id="IPR033753">
    <property type="entry name" value="GCV_H/Fam206"/>
</dbReference>
<dbReference type="InterPro" id="IPR017453">
    <property type="entry name" value="GCV_H_sub"/>
</dbReference>
<dbReference type="InterPro" id="IPR011053">
    <property type="entry name" value="Single_hybrid_motif"/>
</dbReference>
<dbReference type="NCBIfam" id="TIGR00527">
    <property type="entry name" value="gcvH"/>
    <property type="match status" value="1"/>
</dbReference>
<dbReference type="NCBIfam" id="NF002270">
    <property type="entry name" value="PRK01202.1"/>
    <property type="match status" value="1"/>
</dbReference>
<dbReference type="PANTHER" id="PTHR11715">
    <property type="entry name" value="GLYCINE CLEAVAGE SYSTEM H PROTEIN"/>
    <property type="match status" value="1"/>
</dbReference>
<dbReference type="PANTHER" id="PTHR11715:SF3">
    <property type="entry name" value="GLYCINE CLEAVAGE SYSTEM H PROTEIN-RELATED"/>
    <property type="match status" value="1"/>
</dbReference>
<dbReference type="Pfam" id="PF01597">
    <property type="entry name" value="GCV_H"/>
    <property type="match status" value="1"/>
</dbReference>
<dbReference type="SUPFAM" id="SSF51230">
    <property type="entry name" value="Single hybrid motif"/>
    <property type="match status" value="1"/>
</dbReference>
<dbReference type="PROSITE" id="PS50968">
    <property type="entry name" value="BIOTINYL_LIPOYL"/>
    <property type="match status" value="1"/>
</dbReference>
<dbReference type="PROSITE" id="PS00189">
    <property type="entry name" value="LIPOYL"/>
    <property type="match status" value="1"/>
</dbReference>
<reference key="1">
    <citation type="submission" date="2008-04" db="EMBL/GenBank/DDBJ databases">
        <title>Complete sequence of chromosome of Methylobacterium populi BJ001.</title>
        <authorList>
            <consortium name="US DOE Joint Genome Institute"/>
            <person name="Copeland A."/>
            <person name="Lucas S."/>
            <person name="Lapidus A."/>
            <person name="Glavina del Rio T."/>
            <person name="Dalin E."/>
            <person name="Tice H."/>
            <person name="Bruce D."/>
            <person name="Goodwin L."/>
            <person name="Pitluck S."/>
            <person name="Chertkov O."/>
            <person name="Brettin T."/>
            <person name="Detter J.C."/>
            <person name="Han C."/>
            <person name="Kuske C.R."/>
            <person name="Schmutz J."/>
            <person name="Larimer F."/>
            <person name="Land M."/>
            <person name="Hauser L."/>
            <person name="Kyrpides N."/>
            <person name="Mikhailova N."/>
            <person name="Marx C."/>
            <person name="Richardson P."/>
        </authorList>
    </citation>
    <scope>NUCLEOTIDE SEQUENCE [LARGE SCALE GENOMIC DNA]</scope>
    <source>
        <strain>ATCC BAA-705 / NCIMB 13946 / BJ001</strain>
    </source>
</reference>
<sequence length="120" mass="12664">MLRFTDEHEWLRLDGDVATVGITAHAAEQLGDLVFVELPKVGVKLTKGEAAAVVESVKAASDVYAPLSGEVTEVNEAALSDPASVGADPQGAGWLYRLKLDDVSAMDALMDEAAYADFAK</sequence>
<keyword id="KW-0450">Lipoyl</keyword>
<feature type="chain" id="PRO_1000114529" description="Glycine cleavage system H protein">
    <location>
        <begin position="1"/>
        <end position="120"/>
    </location>
</feature>
<feature type="domain" description="Lipoyl-binding" evidence="2">
    <location>
        <begin position="17"/>
        <end position="99"/>
    </location>
</feature>
<feature type="modified residue" description="N6-lipoyllysine" evidence="1">
    <location>
        <position position="58"/>
    </location>
</feature>
<name>GCSH_METPB</name>
<comment type="function">
    <text evidence="1">The glycine cleavage system catalyzes the degradation of glycine. The H protein shuttles the methylamine group of glycine from the P protein to the T protein.</text>
</comment>
<comment type="cofactor">
    <cofactor evidence="1">
        <name>(R)-lipoate</name>
        <dbReference type="ChEBI" id="CHEBI:83088"/>
    </cofactor>
    <text evidence="1">Binds 1 lipoyl cofactor covalently.</text>
</comment>
<comment type="subunit">
    <text evidence="1">The glycine cleavage system is composed of four proteins: P, T, L and H.</text>
</comment>
<comment type="similarity">
    <text evidence="1">Belongs to the GcvH family.</text>
</comment>
<protein>
    <recommendedName>
        <fullName evidence="1">Glycine cleavage system H protein</fullName>
    </recommendedName>
</protein>
<proteinExistence type="inferred from homology"/>
<evidence type="ECO:0000255" key="1">
    <source>
        <dbReference type="HAMAP-Rule" id="MF_00272"/>
    </source>
</evidence>
<evidence type="ECO:0000255" key="2">
    <source>
        <dbReference type="PROSITE-ProRule" id="PRU01066"/>
    </source>
</evidence>
<accession>B1Z7Y5</accession>
<organism>
    <name type="scientific">Methylorubrum populi (strain ATCC BAA-705 / NCIMB 13946 / BJ001)</name>
    <name type="common">Methylobacterium populi</name>
    <dbReference type="NCBI Taxonomy" id="441620"/>
    <lineage>
        <taxon>Bacteria</taxon>
        <taxon>Pseudomonadati</taxon>
        <taxon>Pseudomonadota</taxon>
        <taxon>Alphaproteobacteria</taxon>
        <taxon>Hyphomicrobiales</taxon>
        <taxon>Methylobacteriaceae</taxon>
        <taxon>Methylorubrum</taxon>
    </lineage>
</organism>